<feature type="chain" id="PRO_0000292375" description="Malate dehydrogenase">
    <location>
        <begin position="1"/>
        <end position="325"/>
    </location>
</feature>
<feature type="active site" description="Proton acceptor" evidence="1">
    <location>
        <position position="185"/>
    </location>
</feature>
<feature type="binding site" evidence="1">
    <location>
        <begin position="9"/>
        <end position="15"/>
    </location>
    <ligand>
        <name>NAD(+)</name>
        <dbReference type="ChEBI" id="CHEBI:57540"/>
    </ligand>
</feature>
<feature type="binding site" evidence="1">
    <location>
        <position position="90"/>
    </location>
    <ligand>
        <name>substrate</name>
    </ligand>
</feature>
<feature type="binding site" evidence="1">
    <location>
        <position position="96"/>
    </location>
    <ligand>
        <name>substrate</name>
    </ligand>
</feature>
<feature type="binding site" evidence="1">
    <location>
        <position position="103"/>
    </location>
    <ligand>
        <name>NAD(+)</name>
        <dbReference type="ChEBI" id="CHEBI:57540"/>
    </ligand>
</feature>
<feature type="binding site" evidence="1">
    <location>
        <position position="110"/>
    </location>
    <ligand>
        <name>NAD(+)</name>
        <dbReference type="ChEBI" id="CHEBI:57540"/>
    </ligand>
</feature>
<feature type="binding site" evidence="1">
    <location>
        <begin position="127"/>
        <end position="129"/>
    </location>
    <ligand>
        <name>NAD(+)</name>
        <dbReference type="ChEBI" id="CHEBI:57540"/>
    </ligand>
</feature>
<feature type="binding site" evidence="1">
    <location>
        <position position="129"/>
    </location>
    <ligand>
        <name>substrate</name>
    </ligand>
</feature>
<feature type="binding site" evidence="1">
    <location>
        <position position="160"/>
    </location>
    <ligand>
        <name>substrate</name>
    </ligand>
</feature>
<proteinExistence type="inferred from homology"/>
<accession>Q1AWH4</accession>
<gene>
    <name evidence="1" type="primary">mdh</name>
    <name type="ordered locus">Rxyl_1290</name>
</gene>
<keyword id="KW-0520">NAD</keyword>
<keyword id="KW-0560">Oxidoreductase</keyword>
<keyword id="KW-1185">Reference proteome</keyword>
<keyword id="KW-0816">Tricarboxylic acid cycle</keyword>
<evidence type="ECO:0000255" key="1">
    <source>
        <dbReference type="HAMAP-Rule" id="MF_01517"/>
    </source>
</evidence>
<sequence>MSKTVTVTGAAGAIGYAILFRIASGQMLGPDQKLRLKLLEIEPALKAAEGTAMELYDCAFPLLEAVDITADPKEAFDGANVCLLIGARPRQRGMERADLLEANGQIFKPQGRAINDHAADDVRVLVVGNPANTNCLIAMNNAPDVPRERFSAMTRLDENRAVSMLAQKLGVGVEDVRDLVVWGNHSPTMFPDLFNARVKGQRAVDLVEMEWYENEYIPRVGKRGAEIIEARGASSAASAANAAIDHVRDWMLGADSLHSMAVASSGQYGVEEGLVSSFPVRLPGGGEYEIPEGLEVGDFARSKLEITIGELKEERDAVRKLGLIG</sequence>
<reference key="1">
    <citation type="submission" date="2006-06" db="EMBL/GenBank/DDBJ databases">
        <title>Complete sequence of Rubrobacter xylanophilus DSM 9941.</title>
        <authorList>
            <consortium name="US DOE Joint Genome Institute"/>
            <person name="Copeland A."/>
            <person name="Lucas S."/>
            <person name="Lapidus A."/>
            <person name="Barry K."/>
            <person name="Detter J.C."/>
            <person name="Glavina del Rio T."/>
            <person name="Hammon N."/>
            <person name="Israni S."/>
            <person name="Dalin E."/>
            <person name="Tice H."/>
            <person name="Pitluck S."/>
            <person name="Munk A.C."/>
            <person name="Brettin T."/>
            <person name="Bruce D."/>
            <person name="Han C."/>
            <person name="Tapia R."/>
            <person name="Gilna P."/>
            <person name="Schmutz J."/>
            <person name="Larimer F."/>
            <person name="Land M."/>
            <person name="Hauser L."/>
            <person name="Kyrpides N."/>
            <person name="Lykidis A."/>
            <person name="da Costa M.S."/>
            <person name="Rainey F.A."/>
            <person name="Empadinhas N."/>
            <person name="Jolivet E."/>
            <person name="Battista J.R."/>
            <person name="Richardson P."/>
        </authorList>
    </citation>
    <scope>NUCLEOTIDE SEQUENCE [LARGE SCALE GENOMIC DNA]</scope>
    <source>
        <strain>DSM 9941 / JCM 11954 / NBRC 16129 / PRD-1</strain>
    </source>
</reference>
<organism>
    <name type="scientific">Rubrobacter xylanophilus (strain DSM 9941 / JCM 11954 / NBRC 16129 / PRD-1)</name>
    <dbReference type="NCBI Taxonomy" id="266117"/>
    <lineage>
        <taxon>Bacteria</taxon>
        <taxon>Bacillati</taxon>
        <taxon>Actinomycetota</taxon>
        <taxon>Rubrobacteria</taxon>
        <taxon>Rubrobacterales</taxon>
        <taxon>Rubrobacteraceae</taxon>
        <taxon>Rubrobacter</taxon>
    </lineage>
</organism>
<protein>
    <recommendedName>
        <fullName evidence="1">Malate dehydrogenase</fullName>
        <ecNumber evidence="1">1.1.1.37</ecNumber>
    </recommendedName>
</protein>
<name>MDH_RUBXD</name>
<dbReference type="EC" id="1.1.1.37" evidence="1"/>
<dbReference type="EMBL" id="CP000386">
    <property type="protein sequence ID" value="ABG04254.1"/>
    <property type="molecule type" value="Genomic_DNA"/>
</dbReference>
<dbReference type="RefSeq" id="WP_011564271.1">
    <property type="nucleotide sequence ID" value="NC_008148.1"/>
</dbReference>
<dbReference type="SMR" id="Q1AWH4"/>
<dbReference type="STRING" id="266117.Rxyl_1290"/>
<dbReference type="KEGG" id="rxy:Rxyl_1290"/>
<dbReference type="eggNOG" id="COG0039">
    <property type="taxonomic scope" value="Bacteria"/>
</dbReference>
<dbReference type="HOGENOM" id="CLU_040727_2_0_11"/>
<dbReference type="OrthoDB" id="9802969at2"/>
<dbReference type="PhylomeDB" id="Q1AWH4"/>
<dbReference type="Proteomes" id="UP000006637">
    <property type="component" value="Chromosome"/>
</dbReference>
<dbReference type="GO" id="GO:0030060">
    <property type="term" value="F:L-malate dehydrogenase (NAD+) activity"/>
    <property type="evidence" value="ECO:0007669"/>
    <property type="project" value="UniProtKB-UniRule"/>
</dbReference>
<dbReference type="GO" id="GO:0006108">
    <property type="term" value="P:malate metabolic process"/>
    <property type="evidence" value="ECO:0007669"/>
    <property type="project" value="InterPro"/>
</dbReference>
<dbReference type="GO" id="GO:0006099">
    <property type="term" value="P:tricarboxylic acid cycle"/>
    <property type="evidence" value="ECO:0007669"/>
    <property type="project" value="UniProtKB-UniRule"/>
</dbReference>
<dbReference type="CDD" id="cd01338">
    <property type="entry name" value="MDH_chloroplast-like"/>
    <property type="match status" value="1"/>
</dbReference>
<dbReference type="FunFam" id="3.40.50.720:FF:000010">
    <property type="entry name" value="Malate dehydrogenase"/>
    <property type="match status" value="1"/>
</dbReference>
<dbReference type="FunFam" id="3.90.110.10:FF:000002">
    <property type="entry name" value="Malate dehydrogenase"/>
    <property type="match status" value="1"/>
</dbReference>
<dbReference type="Gene3D" id="3.90.110.10">
    <property type="entry name" value="Lactate dehydrogenase/glycoside hydrolase, family 4, C-terminal"/>
    <property type="match status" value="1"/>
</dbReference>
<dbReference type="Gene3D" id="3.40.50.720">
    <property type="entry name" value="NAD(P)-binding Rossmann-like Domain"/>
    <property type="match status" value="1"/>
</dbReference>
<dbReference type="HAMAP" id="MF_01517">
    <property type="entry name" value="Malate_dehydrog_2"/>
    <property type="match status" value="1"/>
</dbReference>
<dbReference type="InterPro" id="IPR001557">
    <property type="entry name" value="L-lactate/malate_DH"/>
</dbReference>
<dbReference type="InterPro" id="IPR022383">
    <property type="entry name" value="Lactate/malate_DH_C"/>
</dbReference>
<dbReference type="InterPro" id="IPR001236">
    <property type="entry name" value="Lactate/malate_DH_N"/>
</dbReference>
<dbReference type="InterPro" id="IPR015955">
    <property type="entry name" value="Lactate_DH/Glyco_Ohase_4_C"/>
</dbReference>
<dbReference type="InterPro" id="IPR001252">
    <property type="entry name" value="Malate_DH_AS"/>
</dbReference>
<dbReference type="InterPro" id="IPR010945">
    <property type="entry name" value="Malate_DH_type2"/>
</dbReference>
<dbReference type="InterPro" id="IPR036291">
    <property type="entry name" value="NAD(P)-bd_dom_sf"/>
</dbReference>
<dbReference type="NCBIfam" id="TIGR01759">
    <property type="entry name" value="MalateDH-SF1"/>
    <property type="match status" value="1"/>
</dbReference>
<dbReference type="NCBIfam" id="NF003916">
    <property type="entry name" value="PRK05442.1"/>
    <property type="match status" value="1"/>
</dbReference>
<dbReference type="PANTHER" id="PTHR23382">
    <property type="entry name" value="MALATE DEHYDROGENASE"/>
    <property type="match status" value="1"/>
</dbReference>
<dbReference type="Pfam" id="PF02866">
    <property type="entry name" value="Ldh_1_C"/>
    <property type="match status" value="1"/>
</dbReference>
<dbReference type="Pfam" id="PF00056">
    <property type="entry name" value="Ldh_1_N"/>
    <property type="match status" value="1"/>
</dbReference>
<dbReference type="PIRSF" id="PIRSF000102">
    <property type="entry name" value="Lac_mal_DH"/>
    <property type="match status" value="1"/>
</dbReference>
<dbReference type="SUPFAM" id="SSF56327">
    <property type="entry name" value="LDH C-terminal domain-like"/>
    <property type="match status" value="1"/>
</dbReference>
<dbReference type="SUPFAM" id="SSF51735">
    <property type="entry name" value="NAD(P)-binding Rossmann-fold domains"/>
    <property type="match status" value="1"/>
</dbReference>
<dbReference type="PROSITE" id="PS00068">
    <property type="entry name" value="MDH"/>
    <property type="match status" value="1"/>
</dbReference>
<comment type="function">
    <text evidence="1">Catalyzes the reversible oxidation of malate to oxaloacetate.</text>
</comment>
<comment type="catalytic activity">
    <reaction evidence="1">
        <text>(S)-malate + NAD(+) = oxaloacetate + NADH + H(+)</text>
        <dbReference type="Rhea" id="RHEA:21432"/>
        <dbReference type="ChEBI" id="CHEBI:15378"/>
        <dbReference type="ChEBI" id="CHEBI:15589"/>
        <dbReference type="ChEBI" id="CHEBI:16452"/>
        <dbReference type="ChEBI" id="CHEBI:57540"/>
        <dbReference type="ChEBI" id="CHEBI:57945"/>
        <dbReference type="EC" id="1.1.1.37"/>
    </reaction>
</comment>
<comment type="similarity">
    <text evidence="1">Belongs to the LDH/MDH superfamily. MDH type 2 family.</text>
</comment>